<proteinExistence type="inferred from homology"/>
<comment type="function">
    <text evidence="1">Participates actively in the response to hyperosmotic and heat shock by preventing the aggregation of stress-denatured proteins and by disaggregating proteins, also in an autonomous, DnaK-independent fashion. Unfolded proteins bind initially to DnaJ; upon interaction with the DnaJ-bound protein, DnaK hydrolyzes its bound ATP, resulting in the formation of a stable complex. GrpE releases ADP from DnaK; ATP binding to DnaK triggers the release of the substrate protein, thus completing the reaction cycle. Several rounds of ATP-dependent interactions between DnaJ, DnaK and GrpE are required for fully efficient folding. Also involved, together with DnaK and GrpE, in the DNA replication of plasmids through activation of initiation proteins.</text>
</comment>
<comment type="cofactor">
    <cofactor evidence="1">
        <name>Zn(2+)</name>
        <dbReference type="ChEBI" id="CHEBI:29105"/>
    </cofactor>
    <text evidence="1">Binds 2 Zn(2+) ions per monomer.</text>
</comment>
<comment type="subunit">
    <text evidence="1">Homodimer.</text>
</comment>
<comment type="subcellular location">
    <subcellularLocation>
        <location evidence="1">Cytoplasm</location>
    </subcellularLocation>
</comment>
<comment type="domain">
    <text evidence="1">The J domain is necessary and sufficient to stimulate DnaK ATPase activity. Zinc center 1 plays an important role in the autonomous, DnaK-independent chaperone activity of DnaJ. Zinc center 2 is essential for interaction with DnaK and for DnaJ activity.</text>
</comment>
<comment type="similarity">
    <text evidence="1">Belongs to the DnaJ family.</text>
</comment>
<accession>B9KH92</accession>
<keyword id="KW-0143">Chaperone</keyword>
<keyword id="KW-0963">Cytoplasm</keyword>
<keyword id="KW-0235">DNA replication</keyword>
<keyword id="KW-0479">Metal-binding</keyword>
<keyword id="KW-1185">Reference proteome</keyword>
<keyword id="KW-0677">Repeat</keyword>
<keyword id="KW-0346">Stress response</keyword>
<keyword id="KW-0862">Zinc</keyword>
<keyword id="KW-0863">Zinc-finger</keyword>
<organism>
    <name type="scientific">Anaplasma marginale (strain Florida)</name>
    <dbReference type="NCBI Taxonomy" id="320483"/>
    <lineage>
        <taxon>Bacteria</taxon>
        <taxon>Pseudomonadati</taxon>
        <taxon>Pseudomonadota</taxon>
        <taxon>Alphaproteobacteria</taxon>
        <taxon>Rickettsiales</taxon>
        <taxon>Anaplasmataceae</taxon>
        <taxon>Anaplasma</taxon>
    </lineage>
</organism>
<name>DNAJ_ANAMF</name>
<evidence type="ECO:0000255" key="1">
    <source>
        <dbReference type="HAMAP-Rule" id="MF_01152"/>
    </source>
</evidence>
<gene>
    <name evidence="1" type="primary">dnaJ</name>
    <name type="ordered locus">AMF_978</name>
</gene>
<feature type="chain" id="PRO_1000164236" description="Chaperone protein DnaJ">
    <location>
        <begin position="1"/>
        <end position="379"/>
    </location>
</feature>
<feature type="domain" description="J" evidence="1">
    <location>
        <begin position="5"/>
        <end position="70"/>
    </location>
</feature>
<feature type="repeat" description="CXXCXGXG motif">
    <location>
        <begin position="148"/>
        <end position="155"/>
    </location>
</feature>
<feature type="repeat" description="CXXCXGXG motif">
    <location>
        <begin position="165"/>
        <end position="172"/>
    </location>
</feature>
<feature type="repeat" description="CXXCXGXG motif">
    <location>
        <begin position="187"/>
        <end position="194"/>
    </location>
</feature>
<feature type="repeat" description="CXXCXGXG motif">
    <location>
        <begin position="201"/>
        <end position="208"/>
    </location>
</feature>
<feature type="zinc finger region" description="CR-type" evidence="1">
    <location>
        <begin position="135"/>
        <end position="213"/>
    </location>
</feature>
<feature type="binding site" evidence="1">
    <location>
        <position position="148"/>
    </location>
    <ligand>
        <name>Zn(2+)</name>
        <dbReference type="ChEBI" id="CHEBI:29105"/>
        <label>1</label>
    </ligand>
</feature>
<feature type="binding site" evidence="1">
    <location>
        <position position="151"/>
    </location>
    <ligand>
        <name>Zn(2+)</name>
        <dbReference type="ChEBI" id="CHEBI:29105"/>
        <label>1</label>
    </ligand>
</feature>
<feature type="binding site" evidence="1">
    <location>
        <position position="165"/>
    </location>
    <ligand>
        <name>Zn(2+)</name>
        <dbReference type="ChEBI" id="CHEBI:29105"/>
        <label>2</label>
    </ligand>
</feature>
<feature type="binding site" evidence="1">
    <location>
        <position position="168"/>
    </location>
    <ligand>
        <name>Zn(2+)</name>
        <dbReference type="ChEBI" id="CHEBI:29105"/>
        <label>2</label>
    </ligand>
</feature>
<feature type="binding site" evidence="1">
    <location>
        <position position="187"/>
    </location>
    <ligand>
        <name>Zn(2+)</name>
        <dbReference type="ChEBI" id="CHEBI:29105"/>
        <label>2</label>
    </ligand>
</feature>
<feature type="binding site" evidence="1">
    <location>
        <position position="190"/>
    </location>
    <ligand>
        <name>Zn(2+)</name>
        <dbReference type="ChEBI" id="CHEBI:29105"/>
        <label>2</label>
    </ligand>
</feature>
<feature type="binding site" evidence="1">
    <location>
        <position position="201"/>
    </location>
    <ligand>
        <name>Zn(2+)</name>
        <dbReference type="ChEBI" id="CHEBI:29105"/>
        <label>1</label>
    </ligand>
</feature>
<feature type="binding site" evidence="1">
    <location>
        <position position="204"/>
    </location>
    <ligand>
        <name>Zn(2+)</name>
        <dbReference type="ChEBI" id="CHEBI:29105"/>
        <label>1</label>
    </ligand>
</feature>
<dbReference type="EMBL" id="CP001079">
    <property type="protein sequence ID" value="ACM49796.1"/>
    <property type="molecule type" value="Genomic_DNA"/>
</dbReference>
<dbReference type="RefSeq" id="WP_010268992.1">
    <property type="nucleotide sequence ID" value="NZ_AFMS01000079.1"/>
</dbReference>
<dbReference type="SMR" id="B9KH92"/>
<dbReference type="STRING" id="320483.AMF_978"/>
<dbReference type="GeneID" id="7398565"/>
<dbReference type="KEGG" id="amf:AMF_978"/>
<dbReference type="eggNOG" id="COG0484">
    <property type="taxonomic scope" value="Bacteria"/>
</dbReference>
<dbReference type="HOGENOM" id="CLU_017633_0_7_5"/>
<dbReference type="Proteomes" id="UP000007307">
    <property type="component" value="Chromosome"/>
</dbReference>
<dbReference type="GO" id="GO:0005737">
    <property type="term" value="C:cytoplasm"/>
    <property type="evidence" value="ECO:0007669"/>
    <property type="project" value="UniProtKB-SubCell"/>
</dbReference>
<dbReference type="GO" id="GO:0005524">
    <property type="term" value="F:ATP binding"/>
    <property type="evidence" value="ECO:0007669"/>
    <property type="project" value="InterPro"/>
</dbReference>
<dbReference type="GO" id="GO:0031072">
    <property type="term" value="F:heat shock protein binding"/>
    <property type="evidence" value="ECO:0007669"/>
    <property type="project" value="InterPro"/>
</dbReference>
<dbReference type="GO" id="GO:0051082">
    <property type="term" value="F:unfolded protein binding"/>
    <property type="evidence" value="ECO:0007669"/>
    <property type="project" value="UniProtKB-UniRule"/>
</dbReference>
<dbReference type="GO" id="GO:0008270">
    <property type="term" value="F:zinc ion binding"/>
    <property type="evidence" value="ECO:0007669"/>
    <property type="project" value="UniProtKB-UniRule"/>
</dbReference>
<dbReference type="GO" id="GO:0051085">
    <property type="term" value="P:chaperone cofactor-dependent protein refolding"/>
    <property type="evidence" value="ECO:0007669"/>
    <property type="project" value="TreeGrafter"/>
</dbReference>
<dbReference type="GO" id="GO:0006260">
    <property type="term" value="P:DNA replication"/>
    <property type="evidence" value="ECO:0007669"/>
    <property type="project" value="UniProtKB-KW"/>
</dbReference>
<dbReference type="GO" id="GO:0042026">
    <property type="term" value="P:protein refolding"/>
    <property type="evidence" value="ECO:0007669"/>
    <property type="project" value="TreeGrafter"/>
</dbReference>
<dbReference type="GO" id="GO:0009408">
    <property type="term" value="P:response to heat"/>
    <property type="evidence" value="ECO:0007669"/>
    <property type="project" value="InterPro"/>
</dbReference>
<dbReference type="CDD" id="cd06257">
    <property type="entry name" value="DnaJ"/>
    <property type="match status" value="1"/>
</dbReference>
<dbReference type="CDD" id="cd10747">
    <property type="entry name" value="DnaJ_C"/>
    <property type="match status" value="1"/>
</dbReference>
<dbReference type="CDD" id="cd10719">
    <property type="entry name" value="DnaJ_zf"/>
    <property type="match status" value="1"/>
</dbReference>
<dbReference type="FunFam" id="1.10.287.110:FF:000034">
    <property type="entry name" value="Chaperone protein DnaJ"/>
    <property type="match status" value="1"/>
</dbReference>
<dbReference type="FunFam" id="2.10.230.10:FF:000002">
    <property type="entry name" value="Molecular chaperone DnaJ"/>
    <property type="match status" value="1"/>
</dbReference>
<dbReference type="FunFam" id="2.60.260.20:FF:000004">
    <property type="entry name" value="Molecular chaperone DnaJ"/>
    <property type="match status" value="1"/>
</dbReference>
<dbReference type="Gene3D" id="1.10.287.110">
    <property type="entry name" value="DnaJ domain"/>
    <property type="match status" value="1"/>
</dbReference>
<dbReference type="Gene3D" id="2.10.230.10">
    <property type="entry name" value="Heat shock protein DnaJ, cysteine-rich domain"/>
    <property type="match status" value="1"/>
</dbReference>
<dbReference type="Gene3D" id="2.60.260.20">
    <property type="entry name" value="Urease metallochaperone UreE, N-terminal domain"/>
    <property type="match status" value="2"/>
</dbReference>
<dbReference type="HAMAP" id="MF_01152">
    <property type="entry name" value="DnaJ"/>
    <property type="match status" value="1"/>
</dbReference>
<dbReference type="InterPro" id="IPR012724">
    <property type="entry name" value="DnaJ"/>
</dbReference>
<dbReference type="InterPro" id="IPR002939">
    <property type="entry name" value="DnaJ_C"/>
</dbReference>
<dbReference type="InterPro" id="IPR001623">
    <property type="entry name" value="DnaJ_domain"/>
</dbReference>
<dbReference type="InterPro" id="IPR018253">
    <property type="entry name" value="DnaJ_domain_CS"/>
</dbReference>
<dbReference type="InterPro" id="IPR008971">
    <property type="entry name" value="HSP40/DnaJ_pept-bd"/>
</dbReference>
<dbReference type="InterPro" id="IPR001305">
    <property type="entry name" value="HSP_DnaJ_Cys-rich_dom"/>
</dbReference>
<dbReference type="InterPro" id="IPR036410">
    <property type="entry name" value="HSP_DnaJ_Cys-rich_dom_sf"/>
</dbReference>
<dbReference type="InterPro" id="IPR036869">
    <property type="entry name" value="J_dom_sf"/>
</dbReference>
<dbReference type="NCBIfam" id="TIGR02349">
    <property type="entry name" value="DnaJ_bact"/>
    <property type="match status" value="1"/>
</dbReference>
<dbReference type="NCBIfam" id="NF008035">
    <property type="entry name" value="PRK10767.1"/>
    <property type="match status" value="1"/>
</dbReference>
<dbReference type="PANTHER" id="PTHR43096:SF48">
    <property type="entry name" value="CHAPERONE PROTEIN DNAJ"/>
    <property type="match status" value="1"/>
</dbReference>
<dbReference type="PANTHER" id="PTHR43096">
    <property type="entry name" value="DNAJ HOMOLOG 1, MITOCHONDRIAL-RELATED"/>
    <property type="match status" value="1"/>
</dbReference>
<dbReference type="Pfam" id="PF00226">
    <property type="entry name" value="DnaJ"/>
    <property type="match status" value="1"/>
</dbReference>
<dbReference type="Pfam" id="PF01556">
    <property type="entry name" value="DnaJ_C"/>
    <property type="match status" value="1"/>
</dbReference>
<dbReference type="Pfam" id="PF00684">
    <property type="entry name" value="DnaJ_CXXCXGXG"/>
    <property type="match status" value="1"/>
</dbReference>
<dbReference type="PRINTS" id="PR00625">
    <property type="entry name" value="JDOMAIN"/>
</dbReference>
<dbReference type="SMART" id="SM00271">
    <property type="entry name" value="DnaJ"/>
    <property type="match status" value="1"/>
</dbReference>
<dbReference type="SUPFAM" id="SSF46565">
    <property type="entry name" value="Chaperone J-domain"/>
    <property type="match status" value="1"/>
</dbReference>
<dbReference type="SUPFAM" id="SSF57938">
    <property type="entry name" value="DnaJ/Hsp40 cysteine-rich domain"/>
    <property type="match status" value="1"/>
</dbReference>
<dbReference type="SUPFAM" id="SSF49493">
    <property type="entry name" value="HSP40/DnaJ peptide-binding domain"/>
    <property type="match status" value="2"/>
</dbReference>
<dbReference type="PROSITE" id="PS00636">
    <property type="entry name" value="DNAJ_1"/>
    <property type="match status" value="1"/>
</dbReference>
<dbReference type="PROSITE" id="PS50076">
    <property type="entry name" value="DNAJ_2"/>
    <property type="match status" value="1"/>
</dbReference>
<dbReference type="PROSITE" id="PS51188">
    <property type="entry name" value="ZF_CR"/>
    <property type="match status" value="1"/>
</dbReference>
<protein>
    <recommendedName>
        <fullName evidence="1">Chaperone protein DnaJ</fullName>
    </recommendedName>
</protein>
<reference key="1">
    <citation type="journal article" date="2009" name="BMC Genomics">
        <title>Conservation in the face of diversity: multistrain analysis of an intracellular bacterium.</title>
        <authorList>
            <person name="Dark M.J."/>
            <person name="Herndon D.R."/>
            <person name="Kappmeyer L.S."/>
            <person name="Gonzales M.P."/>
            <person name="Nordeen E."/>
            <person name="Palmer G.H."/>
            <person name="Knowles D.P. Jr."/>
            <person name="Brayton K.A."/>
        </authorList>
    </citation>
    <scope>NUCLEOTIDE SEQUENCE [LARGE SCALE GENOMIC DNA]</scope>
    <source>
        <strain>Florida</strain>
    </source>
</reference>
<sequence>MSGNDYYEILEVSRNASAEEIKKSYRKMVFKYHPDKNPGDKKAEEKFKKISEAYEVLSNPEKRAAYDRYGHSTFTSGGASGFDFTSGFSTDFSDIFQDFFGGGFGKSQRASSREHLRGSDLRYDVEVSLEDAFKGIKVPISYVTNVKCSSCSGIGSEGAVNSVKCGNCNGAGSVRTRKGFLTIEEVCNVCNGEGEVIKNKCRRCGGSGRVRNEVSLLVTVPKGIETGNKVRVNGKGEAGFRGAQEGDLYVYIRVKEHKFFTRRSSDLHCSVPIKMTIAALGGEIEMPSIDGSWTKLKIPEGTQSGDQIRMRGKGMPEVNSKDRRGDMYVHVTVETPVKLTKQQVDLLKKFEEESSANCSPKYQGFFQKIKDIWRDISSG</sequence>